<keyword id="KW-0235">DNA replication</keyword>
<keyword id="KW-0539">Nucleus</keyword>
<keyword id="KW-1185">Reference proteome</keyword>
<name>PSF1_EMENI</name>
<protein>
    <recommendedName>
        <fullName>DNA replication complex GINS protein psf1</fullName>
    </recommendedName>
</protein>
<sequence length="223" mass="24989">MYGELGNKLVQHAKRTQSLAHLPPYQTELVRTVAREVRDLDRDLAHLLAPFEGSFNPSQEPAVACALLVDHLCIRRNKRCLLAYHRVRTEKLEELCWKGIDVLEHQQATAAGDDGGQMGGQNSESTGAQGTSGNESSLSPEEEEYFREYSDMLATYKGQWTDIDLTGSLEPPKDLFIDVRVLKDAGEIQTEYGVINLTKNSQLYVRHGDVERLIAQGFLEQLS</sequence>
<organism>
    <name type="scientific">Emericella nidulans (strain FGSC A4 / ATCC 38163 / CBS 112.46 / NRRL 194 / M139)</name>
    <name type="common">Aspergillus nidulans</name>
    <dbReference type="NCBI Taxonomy" id="227321"/>
    <lineage>
        <taxon>Eukaryota</taxon>
        <taxon>Fungi</taxon>
        <taxon>Dikarya</taxon>
        <taxon>Ascomycota</taxon>
        <taxon>Pezizomycotina</taxon>
        <taxon>Eurotiomycetes</taxon>
        <taxon>Eurotiomycetidae</taxon>
        <taxon>Eurotiales</taxon>
        <taxon>Aspergillaceae</taxon>
        <taxon>Aspergillus</taxon>
        <taxon>Aspergillus subgen. Nidulantes</taxon>
    </lineage>
</organism>
<comment type="function">
    <text evidence="1">The GINS complex plays an essential role in the initiation of DNA replication.</text>
</comment>
<comment type="subunit">
    <text evidence="1">Component of the GINS complex which is a heterotetramer of sld5, psf1, psf2 and psf3.</text>
</comment>
<comment type="subcellular location">
    <subcellularLocation>
        <location evidence="1">Nucleus</location>
    </subcellularLocation>
</comment>
<comment type="similarity">
    <text evidence="3">Belongs to the GINS1/PSF1 family.</text>
</comment>
<dbReference type="EMBL" id="AACD01000061">
    <property type="protein sequence ID" value="EAA59874.1"/>
    <property type="molecule type" value="Genomic_DNA"/>
</dbReference>
<dbReference type="EMBL" id="BN001302">
    <property type="protein sequence ID" value="CBF75655.1"/>
    <property type="molecule type" value="Genomic_DNA"/>
</dbReference>
<dbReference type="RefSeq" id="XP_661270.1">
    <property type="nucleotide sequence ID" value="XM_656178.1"/>
</dbReference>
<dbReference type="SMR" id="Q5B714"/>
<dbReference type="FunCoup" id="Q5B714">
    <property type="interactions" value="431"/>
</dbReference>
<dbReference type="STRING" id="227321.Q5B714"/>
<dbReference type="EnsemblFungi" id="CBF75655">
    <property type="protein sequence ID" value="CBF75655"/>
    <property type="gene ID" value="ANIA_03666"/>
</dbReference>
<dbReference type="KEGG" id="ani:ANIA_03666"/>
<dbReference type="VEuPathDB" id="FungiDB:AN3666"/>
<dbReference type="eggNOG" id="KOG3303">
    <property type="taxonomic scope" value="Eukaryota"/>
</dbReference>
<dbReference type="HOGENOM" id="CLU_079191_0_0_1"/>
<dbReference type="InParanoid" id="Q5B714"/>
<dbReference type="OMA" id="MFCEKAT"/>
<dbReference type="OrthoDB" id="10252587at2759"/>
<dbReference type="Proteomes" id="UP000000560">
    <property type="component" value="Chromosome II"/>
</dbReference>
<dbReference type="GO" id="GO:0071162">
    <property type="term" value="C:CMG complex"/>
    <property type="evidence" value="ECO:0007669"/>
    <property type="project" value="EnsemblFungi"/>
</dbReference>
<dbReference type="GO" id="GO:0000811">
    <property type="term" value="C:GINS complex"/>
    <property type="evidence" value="ECO:0000318"/>
    <property type="project" value="GO_Central"/>
</dbReference>
<dbReference type="GO" id="GO:0043596">
    <property type="term" value="C:nuclear replication fork"/>
    <property type="evidence" value="ECO:0007669"/>
    <property type="project" value="EnsemblFungi"/>
</dbReference>
<dbReference type="GO" id="GO:1902983">
    <property type="term" value="P:DNA strand elongation involved in mitotic DNA replication"/>
    <property type="evidence" value="ECO:0000318"/>
    <property type="project" value="GO_Central"/>
</dbReference>
<dbReference type="GO" id="GO:0000727">
    <property type="term" value="P:double-strand break repair via break-induced replication"/>
    <property type="evidence" value="ECO:0007669"/>
    <property type="project" value="EnsemblFungi"/>
</dbReference>
<dbReference type="GO" id="GO:1902975">
    <property type="term" value="P:mitotic DNA replication initiation"/>
    <property type="evidence" value="ECO:0007669"/>
    <property type="project" value="EnsemblFungi"/>
</dbReference>
<dbReference type="CDD" id="cd11710">
    <property type="entry name" value="GINS_A_psf1"/>
    <property type="match status" value="1"/>
</dbReference>
<dbReference type="CDD" id="cd21696">
    <property type="entry name" value="GINS_B_Psf1"/>
    <property type="match status" value="1"/>
</dbReference>
<dbReference type="FunFam" id="1.20.58.1030:FF:000003">
    <property type="entry name" value="DNA replication complex GINS protein PSF1"/>
    <property type="match status" value="1"/>
</dbReference>
<dbReference type="Gene3D" id="1.20.58.1030">
    <property type="match status" value="1"/>
</dbReference>
<dbReference type="InterPro" id="IPR021151">
    <property type="entry name" value="GINS_A"/>
</dbReference>
<dbReference type="InterPro" id="IPR036224">
    <property type="entry name" value="GINS_bundle-like_dom_sf"/>
</dbReference>
<dbReference type="InterPro" id="IPR005339">
    <property type="entry name" value="GINS_Psf1"/>
</dbReference>
<dbReference type="InterPro" id="IPR056783">
    <property type="entry name" value="PSF1_C"/>
</dbReference>
<dbReference type="PANTHER" id="PTHR12914:SF2">
    <property type="entry name" value="DNA REPLICATION COMPLEX GINS PROTEIN PSF1"/>
    <property type="match status" value="1"/>
</dbReference>
<dbReference type="PANTHER" id="PTHR12914">
    <property type="entry name" value="PARTNER OF SLD5"/>
    <property type="match status" value="1"/>
</dbReference>
<dbReference type="Pfam" id="PF24997">
    <property type="entry name" value="PSF1_C"/>
    <property type="match status" value="1"/>
</dbReference>
<dbReference type="Pfam" id="PF05916">
    <property type="entry name" value="Sld5"/>
    <property type="match status" value="1"/>
</dbReference>
<dbReference type="SUPFAM" id="SSF158573">
    <property type="entry name" value="GINS helical bundle-like"/>
    <property type="match status" value="1"/>
</dbReference>
<reference key="1">
    <citation type="journal article" date="2005" name="Nature">
        <title>Sequencing of Aspergillus nidulans and comparative analysis with A. fumigatus and A. oryzae.</title>
        <authorList>
            <person name="Galagan J.E."/>
            <person name="Calvo S.E."/>
            <person name="Cuomo C."/>
            <person name="Ma L.-J."/>
            <person name="Wortman J.R."/>
            <person name="Batzoglou S."/>
            <person name="Lee S.-I."/>
            <person name="Bastuerkmen M."/>
            <person name="Spevak C.C."/>
            <person name="Clutterbuck J."/>
            <person name="Kapitonov V."/>
            <person name="Jurka J."/>
            <person name="Scazzocchio C."/>
            <person name="Farman M.L."/>
            <person name="Butler J."/>
            <person name="Purcell S."/>
            <person name="Harris S."/>
            <person name="Braus G.H."/>
            <person name="Draht O."/>
            <person name="Busch S."/>
            <person name="D'Enfert C."/>
            <person name="Bouchier C."/>
            <person name="Goldman G.H."/>
            <person name="Bell-Pedersen D."/>
            <person name="Griffiths-Jones S."/>
            <person name="Doonan J.H."/>
            <person name="Yu J."/>
            <person name="Vienken K."/>
            <person name="Pain A."/>
            <person name="Freitag M."/>
            <person name="Selker E.U."/>
            <person name="Archer D.B."/>
            <person name="Penalva M.A."/>
            <person name="Oakley B.R."/>
            <person name="Momany M."/>
            <person name="Tanaka T."/>
            <person name="Kumagai T."/>
            <person name="Asai K."/>
            <person name="Machida M."/>
            <person name="Nierman W.C."/>
            <person name="Denning D.W."/>
            <person name="Caddick M.X."/>
            <person name="Hynes M."/>
            <person name="Paoletti M."/>
            <person name="Fischer R."/>
            <person name="Miller B.L."/>
            <person name="Dyer P.S."/>
            <person name="Sachs M.S."/>
            <person name="Osmani S.A."/>
            <person name="Birren B.W."/>
        </authorList>
    </citation>
    <scope>NUCLEOTIDE SEQUENCE [LARGE SCALE GENOMIC DNA]</scope>
    <source>
        <strain>FGSC A4 / ATCC 38163 / CBS 112.46 / NRRL 194 / M139</strain>
    </source>
</reference>
<reference key="2">
    <citation type="journal article" date="2009" name="Fungal Genet. Biol.">
        <title>The 2008 update of the Aspergillus nidulans genome annotation: a community effort.</title>
        <authorList>
            <person name="Wortman J.R."/>
            <person name="Gilsenan J.M."/>
            <person name="Joardar V."/>
            <person name="Deegan J."/>
            <person name="Clutterbuck J."/>
            <person name="Andersen M.R."/>
            <person name="Archer D."/>
            <person name="Bencina M."/>
            <person name="Braus G."/>
            <person name="Coutinho P."/>
            <person name="von Dohren H."/>
            <person name="Doonan J."/>
            <person name="Driessen A.J."/>
            <person name="Durek P."/>
            <person name="Espeso E."/>
            <person name="Fekete E."/>
            <person name="Flipphi M."/>
            <person name="Estrada C.G."/>
            <person name="Geysens S."/>
            <person name="Goldman G."/>
            <person name="de Groot P.W."/>
            <person name="Hansen K."/>
            <person name="Harris S.D."/>
            <person name="Heinekamp T."/>
            <person name="Helmstaedt K."/>
            <person name="Henrissat B."/>
            <person name="Hofmann G."/>
            <person name="Homan T."/>
            <person name="Horio T."/>
            <person name="Horiuchi H."/>
            <person name="James S."/>
            <person name="Jones M."/>
            <person name="Karaffa L."/>
            <person name="Karanyi Z."/>
            <person name="Kato M."/>
            <person name="Keller N."/>
            <person name="Kelly D.E."/>
            <person name="Kiel J.A."/>
            <person name="Kim J.M."/>
            <person name="van der Klei I.J."/>
            <person name="Klis F.M."/>
            <person name="Kovalchuk A."/>
            <person name="Krasevec N."/>
            <person name="Kubicek C.P."/>
            <person name="Liu B."/>
            <person name="Maccabe A."/>
            <person name="Meyer V."/>
            <person name="Mirabito P."/>
            <person name="Miskei M."/>
            <person name="Mos M."/>
            <person name="Mullins J."/>
            <person name="Nelson D.R."/>
            <person name="Nielsen J."/>
            <person name="Oakley B.R."/>
            <person name="Osmani S.A."/>
            <person name="Pakula T."/>
            <person name="Paszewski A."/>
            <person name="Paulsen I."/>
            <person name="Pilsyk S."/>
            <person name="Pocsi I."/>
            <person name="Punt P.J."/>
            <person name="Ram A.F."/>
            <person name="Ren Q."/>
            <person name="Robellet X."/>
            <person name="Robson G."/>
            <person name="Seiboth B."/>
            <person name="van Solingen P."/>
            <person name="Specht T."/>
            <person name="Sun J."/>
            <person name="Taheri-Talesh N."/>
            <person name="Takeshita N."/>
            <person name="Ussery D."/>
            <person name="vanKuyk P.A."/>
            <person name="Visser H."/>
            <person name="van de Vondervoort P.J."/>
            <person name="de Vries R.P."/>
            <person name="Walton J."/>
            <person name="Xiang X."/>
            <person name="Xiong Y."/>
            <person name="Zeng A.P."/>
            <person name="Brandt B.W."/>
            <person name="Cornell M.J."/>
            <person name="van den Hondel C.A."/>
            <person name="Visser J."/>
            <person name="Oliver S.G."/>
            <person name="Turner G."/>
        </authorList>
    </citation>
    <scope>GENOME REANNOTATION</scope>
    <source>
        <strain>FGSC A4 / ATCC 38163 / CBS 112.46 / NRRL 194 / M139</strain>
    </source>
</reference>
<proteinExistence type="inferred from homology"/>
<accession>Q5B714</accession>
<accession>C8V3U2</accession>
<gene>
    <name type="primary">psf1</name>
    <name type="ORF">AN3666</name>
</gene>
<feature type="chain" id="PRO_0000278401" description="DNA replication complex GINS protein psf1">
    <location>
        <begin position="1"/>
        <end position="223"/>
    </location>
</feature>
<feature type="region of interest" description="Disordered" evidence="2">
    <location>
        <begin position="110"/>
        <end position="142"/>
    </location>
</feature>
<feature type="compositionally biased region" description="Polar residues" evidence="2">
    <location>
        <begin position="122"/>
        <end position="139"/>
    </location>
</feature>
<evidence type="ECO:0000250" key="1"/>
<evidence type="ECO:0000256" key="2">
    <source>
        <dbReference type="SAM" id="MobiDB-lite"/>
    </source>
</evidence>
<evidence type="ECO:0000305" key="3"/>